<sequence length="131" mass="14010">MSWQAYVDDHLMCDIEGQHLTAAAIIGHDGSVWAQSATFPQFKPEEVAAIIKDFDEPGSLAPTGLHLGGTKYMVIQGEPGAVIRGKKGAGGITVKKTGQALIFGIYDEPLTPGQCNIIVERLGDYLLEQGQ</sequence>
<feature type="initiator methionine" description="Removed" evidence="1">
    <location>
        <position position="1"/>
    </location>
</feature>
<feature type="chain" id="PRO_0000425051" description="Profilin-4">
    <location>
        <begin position="2"/>
        <end position="131"/>
    </location>
</feature>
<feature type="short sequence motif" description="Involved in PIP2 interaction">
    <location>
        <begin position="81"/>
        <end position="97"/>
    </location>
</feature>
<feature type="modified residue" description="Phosphothreonine" evidence="1">
    <location>
        <position position="111"/>
    </location>
</feature>
<feature type="disulfide bond" evidence="3">
    <location>
        <begin position="13"/>
        <end position="115"/>
    </location>
</feature>
<dbReference type="EMBL" id="DQ640910">
    <property type="protein sequence ID" value="ABG33906.1"/>
    <property type="molecule type" value="mRNA"/>
</dbReference>
<dbReference type="SMR" id="A4GFC4"/>
<dbReference type="Allergome" id="490">
    <property type="allergen name" value="Ole e 2"/>
</dbReference>
<dbReference type="GO" id="GO:0005938">
    <property type="term" value="C:cell cortex"/>
    <property type="evidence" value="ECO:0007669"/>
    <property type="project" value="TreeGrafter"/>
</dbReference>
<dbReference type="GO" id="GO:0005856">
    <property type="term" value="C:cytoskeleton"/>
    <property type="evidence" value="ECO:0007669"/>
    <property type="project" value="UniProtKB-SubCell"/>
</dbReference>
<dbReference type="GO" id="GO:0003785">
    <property type="term" value="F:actin monomer binding"/>
    <property type="evidence" value="ECO:0007669"/>
    <property type="project" value="TreeGrafter"/>
</dbReference>
<dbReference type="CDD" id="cd00148">
    <property type="entry name" value="PROF"/>
    <property type="match status" value="1"/>
</dbReference>
<dbReference type="FunFam" id="3.30.450.30:FF:000001">
    <property type="entry name" value="Profilin"/>
    <property type="match status" value="1"/>
</dbReference>
<dbReference type="Gene3D" id="3.30.450.30">
    <property type="entry name" value="Dynein light chain 2a, cytoplasmic"/>
    <property type="match status" value="1"/>
</dbReference>
<dbReference type="InterPro" id="IPR048278">
    <property type="entry name" value="PFN"/>
</dbReference>
<dbReference type="InterPro" id="IPR005455">
    <property type="entry name" value="PFN_euk"/>
</dbReference>
<dbReference type="InterPro" id="IPR036140">
    <property type="entry name" value="PFN_sf"/>
</dbReference>
<dbReference type="InterPro" id="IPR027310">
    <property type="entry name" value="Profilin_CS"/>
</dbReference>
<dbReference type="PANTHER" id="PTHR11604">
    <property type="entry name" value="PROFILIN"/>
    <property type="match status" value="1"/>
</dbReference>
<dbReference type="PANTHER" id="PTHR11604:SF35">
    <property type="entry name" value="PROFILIN-3"/>
    <property type="match status" value="1"/>
</dbReference>
<dbReference type="Pfam" id="PF00235">
    <property type="entry name" value="Profilin"/>
    <property type="match status" value="1"/>
</dbReference>
<dbReference type="PRINTS" id="PR00392">
    <property type="entry name" value="PROFILIN"/>
</dbReference>
<dbReference type="PRINTS" id="PR01640">
    <property type="entry name" value="PROFILINPLNT"/>
</dbReference>
<dbReference type="SMART" id="SM00392">
    <property type="entry name" value="PROF"/>
    <property type="match status" value="1"/>
</dbReference>
<dbReference type="SUPFAM" id="SSF55770">
    <property type="entry name" value="Profilin (actin-binding protein)"/>
    <property type="match status" value="1"/>
</dbReference>
<dbReference type="PROSITE" id="PS00414">
    <property type="entry name" value="PROFILIN"/>
    <property type="match status" value="1"/>
</dbReference>
<comment type="function">
    <text evidence="1">Binds to actin and affects the structure of the cytoskeleton. At high concentrations, profilin prevents the polymerization of actin, whereas it enhances it at low concentrations (By similarity).</text>
</comment>
<comment type="subunit">
    <text evidence="1">Occurs in many kinds of cells as a complex with monomeric actin in a 1:1 ratio.</text>
</comment>
<comment type="subcellular location">
    <subcellularLocation>
        <location evidence="1">Cytoplasm</location>
        <location evidence="1">Cytoskeleton</location>
    </subcellularLocation>
</comment>
<comment type="PTM">
    <text evidence="1">Phosphorylated by MAP kinases.</text>
</comment>
<comment type="polymorphism">
    <text>Several isoforms of the allergen exist due to polymorphism.</text>
</comment>
<comment type="allergen">
    <text>Causes an allergic reaction in human.</text>
</comment>
<comment type="miscellaneous">
    <text evidence="3">The variability of the residues taking part of IgE-binding epitopes might be responsible of the difference in cross-reactivity among olive pollen cultivars, and between distantly related pollen species, leading to a variable range of allergy reactions among atopic patients.</text>
</comment>
<comment type="similarity">
    <text evidence="2">Belongs to the profilin family.</text>
</comment>
<evidence type="ECO:0000250" key="1"/>
<evidence type="ECO:0000305" key="2"/>
<evidence type="ECO:0000305" key="3">
    <source>
    </source>
</evidence>
<keyword id="KW-0009">Actin-binding</keyword>
<keyword id="KW-0020">Allergen</keyword>
<keyword id="KW-0963">Cytoplasm</keyword>
<keyword id="KW-0206">Cytoskeleton</keyword>
<keyword id="KW-1015">Disulfide bond</keyword>
<keyword id="KW-0597">Phosphoprotein</keyword>
<protein>
    <recommendedName>
        <fullName>Profilin-4</fullName>
    </recommendedName>
    <alternativeName>
        <fullName>Pollen allergen Ole e 2</fullName>
    </alternativeName>
    <allergenName>Ole e 2</allergenName>
</protein>
<name>PROCH_OLEEU</name>
<accession>A4GFC4</accession>
<reference key="1">
    <citation type="journal article" date="2012" name="PLoS ONE">
        <title>Characterization of profilin polymorphism in pollen with a focus on multifunctionality.</title>
        <authorList>
            <person name="Jimenez-Lopez J.C."/>
            <person name="Morales S."/>
            <person name="Castro A.J."/>
            <person name="Volkmann D."/>
            <person name="Rodriguez-Garcia M.I."/>
            <person name="Alche Jde D."/>
        </authorList>
    </citation>
    <scope>NUCLEOTIDE SEQUENCE [MRNA]</scope>
    <scope>POLYMORPHISM</scope>
    <source>
        <strain>cv. Bella de Espana</strain>
    </source>
</reference>
<reference key="2">
    <citation type="journal article" date="2013" name="PLoS ONE">
        <title>Analysis of the effects of polymorphism on pollen profilin structural functionality and the generation of conformational, T- and B-cell epitopes.</title>
        <authorList>
            <person name="Jimenez-Lopez J.C."/>
            <person name="Rodriguez-Garcia M.I."/>
            <person name="Alche J.D."/>
        </authorList>
    </citation>
    <scope>3D-STRUCTURE MODELING</scope>
    <scope>DISULFIDE BOND</scope>
</reference>
<proteinExistence type="evidence at protein level"/>
<organism>
    <name type="scientific">Olea europaea</name>
    <name type="common">Common olive</name>
    <dbReference type="NCBI Taxonomy" id="4146"/>
    <lineage>
        <taxon>Eukaryota</taxon>
        <taxon>Viridiplantae</taxon>
        <taxon>Streptophyta</taxon>
        <taxon>Embryophyta</taxon>
        <taxon>Tracheophyta</taxon>
        <taxon>Spermatophyta</taxon>
        <taxon>Magnoliopsida</taxon>
        <taxon>eudicotyledons</taxon>
        <taxon>Gunneridae</taxon>
        <taxon>Pentapetalae</taxon>
        <taxon>asterids</taxon>
        <taxon>lamiids</taxon>
        <taxon>Lamiales</taxon>
        <taxon>Oleaceae</taxon>
        <taxon>Oleeae</taxon>
        <taxon>Olea</taxon>
    </lineage>
</organism>